<dbReference type="EMBL" id="AF142621">
    <property type="protein sequence ID" value="AAF03089.1"/>
    <property type="molecule type" value="Genomic_DNA"/>
</dbReference>
<dbReference type="EMBL" id="AF142618">
    <property type="protein sequence ID" value="AAF03089.1"/>
    <property type="status" value="JOINED"/>
    <property type="molecule type" value="Genomic_DNA"/>
</dbReference>
<dbReference type="EMBL" id="AF142619">
    <property type="protein sequence ID" value="AAF03089.1"/>
    <property type="status" value="JOINED"/>
    <property type="molecule type" value="Genomic_DNA"/>
</dbReference>
<dbReference type="EMBL" id="AF142620">
    <property type="protein sequence ID" value="AAF03089.1"/>
    <property type="status" value="JOINED"/>
    <property type="molecule type" value="Genomic_DNA"/>
</dbReference>
<dbReference type="EMBL" id="AF148220">
    <property type="protein sequence ID" value="AAF00132.1"/>
    <property type="molecule type" value="mRNA"/>
</dbReference>
<dbReference type="EMBL" id="AF361351">
    <property type="protein sequence ID" value="AAL50046.1"/>
    <property type="molecule type" value="mRNA"/>
</dbReference>
<dbReference type="EMBL" id="AF458898">
    <property type="protein sequence ID" value="AAM00595.1"/>
    <property type="molecule type" value="mRNA"/>
</dbReference>
<dbReference type="EMBL" id="AK290171">
    <property type="protein sequence ID" value="BAF82860.1"/>
    <property type="molecule type" value="mRNA"/>
</dbReference>
<dbReference type="EMBL" id="BC101607">
    <property type="protein sequence ID" value="AAI01608.1"/>
    <property type="molecule type" value="mRNA"/>
</dbReference>
<dbReference type="EMBL" id="BC101633">
    <property type="protein sequence ID" value="AAI01634.1"/>
    <property type="molecule type" value="mRNA"/>
</dbReference>
<dbReference type="CCDS" id="CCDS11665.1"/>
<dbReference type="RefSeq" id="NP_665810.1">
    <property type="nucleotide sequence ID" value="NM_145811.3"/>
</dbReference>
<dbReference type="SMR" id="Q9UF02"/>
<dbReference type="BioGRID" id="117993">
    <property type="interactions" value="56"/>
</dbReference>
<dbReference type="FunCoup" id="Q9UF02">
    <property type="interactions" value="555"/>
</dbReference>
<dbReference type="IntAct" id="Q9UF02">
    <property type="interactions" value="40"/>
</dbReference>
<dbReference type="STRING" id="9606.ENSP00000436836"/>
<dbReference type="ChEMBL" id="CHEMBL2363032"/>
<dbReference type="DrugBank" id="DB13746">
    <property type="generic name" value="Bioallethrin"/>
</dbReference>
<dbReference type="DrugBank" id="DB11148">
    <property type="generic name" value="Butamben"/>
</dbReference>
<dbReference type="DrugBank" id="DB09235">
    <property type="generic name" value="Efonidipine"/>
</dbReference>
<dbReference type="DrugBank" id="DB00228">
    <property type="generic name" value="Enflurane"/>
</dbReference>
<dbReference type="DrugBank" id="DB00153">
    <property type="generic name" value="Ergocalciferol"/>
</dbReference>
<dbReference type="DrugBank" id="DB00622">
    <property type="generic name" value="Nicardipine"/>
</dbReference>
<dbReference type="DrugBank" id="DB00661">
    <property type="generic name" value="Verapamil"/>
</dbReference>
<dbReference type="iPTMnet" id="Q9UF02"/>
<dbReference type="PhosphoSitePlus" id="Q9UF02"/>
<dbReference type="BioMuta" id="CACNG5"/>
<dbReference type="DMDM" id="20532390"/>
<dbReference type="MassIVE" id="Q9UF02"/>
<dbReference type="PaxDb" id="9606-ENSP00000436836"/>
<dbReference type="PeptideAtlas" id="Q9UF02"/>
<dbReference type="ProteomicsDB" id="84162"/>
<dbReference type="Antibodypedia" id="31684">
    <property type="antibodies" value="109 antibodies from 31 providers"/>
</dbReference>
<dbReference type="DNASU" id="27091"/>
<dbReference type="Ensembl" id="ENST00000307139.4">
    <property type="protein sequence ID" value="ENSP00000303092.3"/>
    <property type="gene ID" value="ENSG00000075429.9"/>
</dbReference>
<dbReference type="Ensembl" id="ENST00000533854.6">
    <property type="protein sequence ID" value="ENSP00000436836.1"/>
    <property type="gene ID" value="ENSG00000075429.9"/>
</dbReference>
<dbReference type="GeneID" id="27091"/>
<dbReference type="KEGG" id="hsa:27091"/>
<dbReference type="MANE-Select" id="ENST00000533854.6">
    <property type="protein sequence ID" value="ENSP00000436836.1"/>
    <property type="RefSeq nucleotide sequence ID" value="NM_145811.3"/>
    <property type="RefSeq protein sequence ID" value="NP_665810.1"/>
</dbReference>
<dbReference type="UCSC" id="uc010wqi.3">
    <property type="organism name" value="human"/>
</dbReference>
<dbReference type="AGR" id="HGNC:1409"/>
<dbReference type="CTD" id="27091"/>
<dbReference type="DisGeNET" id="27091"/>
<dbReference type="GeneCards" id="CACNG5"/>
<dbReference type="HGNC" id="HGNC:1409">
    <property type="gene designation" value="CACNG5"/>
</dbReference>
<dbReference type="HPA" id="ENSG00000075429">
    <property type="expression patterns" value="Tissue enriched (retina)"/>
</dbReference>
<dbReference type="MIM" id="606405">
    <property type="type" value="gene"/>
</dbReference>
<dbReference type="neXtProt" id="NX_Q9UF02"/>
<dbReference type="OpenTargets" id="ENSG00000075429"/>
<dbReference type="PharmGKB" id="PA26019"/>
<dbReference type="VEuPathDB" id="HostDB:ENSG00000075429"/>
<dbReference type="eggNOG" id="ENOG502QTQ7">
    <property type="taxonomic scope" value="Eukaryota"/>
</dbReference>
<dbReference type="GeneTree" id="ENSGT01050000244961"/>
<dbReference type="HOGENOM" id="CLU_053704_1_1_1"/>
<dbReference type="InParanoid" id="Q9UF02"/>
<dbReference type="OMA" id="SESFFNY"/>
<dbReference type="OrthoDB" id="5917530at2759"/>
<dbReference type="PAN-GO" id="Q9UF02">
    <property type="GO annotations" value="10 GO annotations based on evolutionary models"/>
</dbReference>
<dbReference type="PhylomeDB" id="Q9UF02"/>
<dbReference type="TreeFam" id="TF327980"/>
<dbReference type="PathwayCommons" id="Q9UF02"/>
<dbReference type="SignaLink" id="Q9UF02"/>
<dbReference type="BioGRID-ORCS" id="27091">
    <property type="hits" value="16 hits in 1148 CRISPR screens"/>
</dbReference>
<dbReference type="ChiTaRS" id="CACNG5">
    <property type="organism name" value="human"/>
</dbReference>
<dbReference type="GenomeRNAi" id="27091"/>
<dbReference type="Pharos" id="Q9UF02">
    <property type="development level" value="Tdark"/>
</dbReference>
<dbReference type="PRO" id="PR:Q9UF02"/>
<dbReference type="Proteomes" id="UP000005640">
    <property type="component" value="Chromosome 17"/>
</dbReference>
<dbReference type="RNAct" id="Q9UF02">
    <property type="molecule type" value="protein"/>
</dbReference>
<dbReference type="Bgee" id="ENSG00000075429">
    <property type="expression patterns" value="Expressed in primordial germ cell in gonad and 29 other cell types or tissues"/>
</dbReference>
<dbReference type="ExpressionAtlas" id="Q9UF02">
    <property type="expression patterns" value="baseline and differential"/>
</dbReference>
<dbReference type="GO" id="GO:0032281">
    <property type="term" value="C:AMPA glutamate receptor complex"/>
    <property type="evidence" value="ECO:0000250"/>
    <property type="project" value="UniProtKB"/>
</dbReference>
<dbReference type="GO" id="GO:0098978">
    <property type="term" value="C:glutamatergic synapse"/>
    <property type="evidence" value="ECO:0000314"/>
    <property type="project" value="SynGO"/>
</dbReference>
<dbReference type="GO" id="GO:0014069">
    <property type="term" value="C:postsynaptic density"/>
    <property type="evidence" value="ECO:0000250"/>
    <property type="project" value="UniProtKB"/>
</dbReference>
<dbReference type="GO" id="GO:0098839">
    <property type="term" value="C:postsynaptic density membrane"/>
    <property type="evidence" value="ECO:0000318"/>
    <property type="project" value="GO_Central"/>
</dbReference>
<dbReference type="GO" id="GO:0016247">
    <property type="term" value="F:channel regulator activity"/>
    <property type="evidence" value="ECO:0000318"/>
    <property type="project" value="GO_Central"/>
</dbReference>
<dbReference type="GO" id="GO:0015075">
    <property type="term" value="F:monoatomic ion transmembrane transporter activity"/>
    <property type="evidence" value="ECO:0000304"/>
    <property type="project" value="ProtInc"/>
</dbReference>
<dbReference type="GO" id="GO:0005245">
    <property type="term" value="F:voltage-gated calcium channel activity"/>
    <property type="evidence" value="ECO:0000318"/>
    <property type="project" value="GO_Central"/>
</dbReference>
<dbReference type="GO" id="GO:0051968">
    <property type="term" value="P:positive regulation of synaptic transmission, glutamatergic"/>
    <property type="evidence" value="ECO:0000318"/>
    <property type="project" value="GO_Central"/>
</dbReference>
<dbReference type="GO" id="GO:0098970">
    <property type="term" value="P:postsynaptic neurotransmitter receptor diffusion trapping"/>
    <property type="evidence" value="ECO:0000318"/>
    <property type="project" value="GO_Central"/>
</dbReference>
<dbReference type="GO" id="GO:2000311">
    <property type="term" value="P:regulation of AMPA receptor activity"/>
    <property type="evidence" value="ECO:0000250"/>
    <property type="project" value="UniProtKB"/>
</dbReference>
<dbReference type="GO" id="GO:0019226">
    <property type="term" value="P:transmission of nerve impulse"/>
    <property type="evidence" value="ECO:0000318"/>
    <property type="project" value="GO_Central"/>
</dbReference>
<dbReference type="FunFam" id="1.20.140.150:FF:000003">
    <property type="entry name" value="Voltage-dependent calcium channel gamma-7 subunit"/>
    <property type="match status" value="1"/>
</dbReference>
<dbReference type="Gene3D" id="1.20.140.150">
    <property type="match status" value="1"/>
</dbReference>
<dbReference type="InterPro" id="IPR051072">
    <property type="entry name" value="CACNG_subunit"/>
</dbReference>
<dbReference type="InterPro" id="IPR004031">
    <property type="entry name" value="PMP22/EMP/MP20/Claudin"/>
</dbReference>
<dbReference type="InterPro" id="IPR008369">
    <property type="entry name" value="VDCC_g5su"/>
</dbReference>
<dbReference type="InterPro" id="IPR008368">
    <property type="entry name" value="VDCC_gsu"/>
</dbReference>
<dbReference type="PANTHER" id="PTHR12107">
    <property type="entry name" value="VOLTAGE-DEPENDENT CALCIUM CHANNEL GAMMA SUBUNIT"/>
    <property type="match status" value="1"/>
</dbReference>
<dbReference type="PANTHER" id="PTHR12107:SF4">
    <property type="entry name" value="VOLTAGE-DEPENDENT CALCIUM CHANNEL GAMMA-5 SUBUNIT"/>
    <property type="match status" value="1"/>
</dbReference>
<dbReference type="Pfam" id="PF13903">
    <property type="entry name" value="Claudin_2"/>
    <property type="match status" value="1"/>
</dbReference>
<dbReference type="PRINTS" id="PR01792">
    <property type="entry name" value="VDCCGAMMA"/>
</dbReference>
<dbReference type="PRINTS" id="PR01793">
    <property type="entry name" value="VDCCGAMMA5"/>
</dbReference>
<protein>
    <recommendedName>
        <fullName>Voltage-dependent calcium channel gamma-5 subunit</fullName>
    </recommendedName>
    <alternativeName>
        <fullName>Neuronal voltage-gated calcium channel gamma-5 subunit</fullName>
    </alternativeName>
    <alternativeName>
        <fullName>Transmembrane AMPAR regulatory protein gamma-5</fullName>
        <shortName>TARP gamma-5</shortName>
    </alternativeName>
</protein>
<sequence>MSACGRKALTLLSSVFAVCGLGLLGIAVSTDYWLYLEEGVIVPQNQSTEIKMSLHSGLWRVCFLAGEERGRCFTIEYVMPMNTQLTSESTVNVLKMIRSATPFPLVSLFFMFIGFILNNIGHIRPHRTILAFVSGIFFILSGLSLVVGLVLYISSINDEMLNRTKDAETYFNYKYGWSFAFAAISFLLTESAGVMSVYLFMKRYTAEDMYRPHPGFYRPRLSNCSDYSGQFLHPDAWVRGRSPSDISSEASLQMNSNYPALLKCPDYDQMSSSPC</sequence>
<feature type="chain" id="PRO_0000164681" description="Voltage-dependent calcium channel gamma-5 subunit">
    <location>
        <begin position="1"/>
        <end position="275"/>
    </location>
</feature>
<feature type="transmembrane region" description="Helical" evidence="2">
    <location>
        <begin position="8"/>
        <end position="28"/>
    </location>
</feature>
<feature type="transmembrane region" description="Helical" evidence="2">
    <location>
        <begin position="103"/>
        <end position="123"/>
    </location>
</feature>
<feature type="transmembrane region" description="Helical" evidence="2">
    <location>
        <begin position="129"/>
        <end position="149"/>
    </location>
</feature>
<feature type="transmembrane region" description="Helical" evidence="2">
    <location>
        <begin position="176"/>
        <end position="196"/>
    </location>
</feature>
<feature type="sequence conflict" description="In Ref. 1; AAF03089." evidence="3" ref="1">
    <original>SAGVMSVYLFMKRYTAEDMYRPHPGFYRPRLSNCSDYSGQFLHPDAWVRGRSPSDISSEASLQMNSNYPALLKCPDYDQMSSSPC</original>
    <variation>VKPVTLSMDRLGLGTAPLSRGEWGWGRRDIPQPFWTPDHPLYFPSSSQNVSLSYLSGSPPARMSPGPCSCPHVHFPPHSSCVLCRPQPREMRQAPAASPSSAVFSL</variation>
    <location>
        <begin position="191"/>
        <end position="275"/>
    </location>
</feature>
<evidence type="ECO:0000250" key="1"/>
<evidence type="ECO:0000255" key="2"/>
<evidence type="ECO:0000305" key="3"/>
<comment type="function">
    <text evidence="1">Regulates the gating properties of AMPA-selective glutamate receptors (AMPARs). Modulates their gating properties by accelerating their rates of activation, deactivation and desensitization. Displays subunit-specific AMPA receptor regulation. Shows specificity for GRIA1, GRIA4 and the long isoform of GRIA2. Thought to stabilize the calcium channel in an inactivated (closed) state (By similarity).</text>
</comment>
<comment type="subunit">
    <text evidence="1">The L-type calcium channel is composed of five subunits: alpha-1, alpha-2/delta, beta and gamma. Acts as an auxiliary subunit for AMPA-selective glutamate receptors (AMPARs). Found in a complex with GRIA1, GRIA2, GRIA3, GRIA4, CNIH2, CNIH3, CACNG2, CACNG3, CACNG4, CACNG7 and CACNG8. Interacts with GRIA1, GRIA2, GRIA3 and GRIA4 (By similarity).</text>
</comment>
<comment type="subcellular location">
    <subcellularLocation>
        <location evidence="1">Membrane</location>
        <topology evidence="1">Multi-pass membrane protein</topology>
    </subcellularLocation>
    <subcellularLocation>
        <location evidence="1">Postsynaptic density membrane</location>
    </subcellularLocation>
</comment>
<comment type="similarity">
    <text evidence="3">Belongs to the PMP-22/EMP/MP20 family. CACNG subfamily.</text>
</comment>
<accession>Q9UF02</accession>
<accession>A8K2A6</accession>
<accession>Q547R3</accession>
<accession>Q8WXS7</accession>
<accession>Q9UHM3</accession>
<keyword id="KW-1003">Cell membrane</keyword>
<keyword id="KW-0472">Membrane</keyword>
<keyword id="KW-0628">Postsynaptic cell membrane</keyword>
<keyword id="KW-1267">Proteomics identification</keyword>
<keyword id="KW-1185">Reference proteome</keyword>
<keyword id="KW-0770">Synapse</keyword>
<keyword id="KW-0812">Transmembrane</keyword>
<keyword id="KW-1133">Transmembrane helix</keyword>
<proteinExistence type="evidence at protein level"/>
<reference key="1">
    <citation type="journal article" date="1999" name="Genome Res.">
        <title>Identification of three novel Ca(2+) channel gamma subunit genes reveals molecular diversification by tandem and chromosome duplication.</title>
        <authorList>
            <person name="Burgess D.L."/>
            <person name="Davis C.F."/>
            <person name="Gefrides L.A."/>
            <person name="Noebels J.L."/>
        </authorList>
    </citation>
    <scope>NUCLEOTIDE SEQUENCE [GENOMIC DNA / MRNA]</scope>
</reference>
<reference key="2">
    <citation type="journal article" date="2001" name="Gene">
        <title>Calcium channel gamma subunits provide insights into the evolution of this gene family.</title>
        <authorList>
            <person name="Chu P.-J."/>
            <person name="Robertson H.M."/>
            <person name="Best P.M."/>
        </authorList>
    </citation>
    <scope>NUCLEOTIDE SEQUENCE [MRNA]</scope>
</reference>
<reference key="3">
    <citation type="journal article" date="2002" name="EMBO J.">
        <title>The novel product of a five-exon stargazin-related gene abolishes CaV2.2 calcium channel expression.</title>
        <authorList>
            <person name="Moss F.J."/>
            <person name="Viard P."/>
            <person name="Davies A."/>
            <person name="Bertaso F."/>
            <person name="Page K.M."/>
            <person name="Graham A."/>
            <person name="Canti C."/>
            <person name="Plumpton M."/>
            <person name="Plumpton C."/>
            <person name="Clare J.J."/>
            <person name="Dolphin A.C."/>
        </authorList>
    </citation>
    <scope>NUCLEOTIDE SEQUENCE [MRNA]</scope>
</reference>
<reference key="4">
    <citation type="journal article" date="2004" name="Nat. Genet.">
        <title>Complete sequencing and characterization of 21,243 full-length human cDNAs.</title>
        <authorList>
            <person name="Ota T."/>
            <person name="Suzuki Y."/>
            <person name="Nishikawa T."/>
            <person name="Otsuki T."/>
            <person name="Sugiyama T."/>
            <person name="Irie R."/>
            <person name="Wakamatsu A."/>
            <person name="Hayashi K."/>
            <person name="Sato H."/>
            <person name="Nagai K."/>
            <person name="Kimura K."/>
            <person name="Makita H."/>
            <person name="Sekine M."/>
            <person name="Obayashi M."/>
            <person name="Nishi T."/>
            <person name="Shibahara T."/>
            <person name="Tanaka T."/>
            <person name="Ishii S."/>
            <person name="Yamamoto J."/>
            <person name="Saito K."/>
            <person name="Kawai Y."/>
            <person name="Isono Y."/>
            <person name="Nakamura Y."/>
            <person name="Nagahari K."/>
            <person name="Murakami K."/>
            <person name="Yasuda T."/>
            <person name="Iwayanagi T."/>
            <person name="Wagatsuma M."/>
            <person name="Shiratori A."/>
            <person name="Sudo H."/>
            <person name="Hosoiri T."/>
            <person name="Kaku Y."/>
            <person name="Kodaira H."/>
            <person name="Kondo H."/>
            <person name="Sugawara M."/>
            <person name="Takahashi M."/>
            <person name="Kanda K."/>
            <person name="Yokoi T."/>
            <person name="Furuya T."/>
            <person name="Kikkawa E."/>
            <person name="Omura Y."/>
            <person name="Abe K."/>
            <person name="Kamihara K."/>
            <person name="Katsuta N."/>
            <person name="Sato K."/>
            <person name="Tanikawa M."/>
            <person name="Yamazaki M."/>
            <person name="Ninomiya K."/>
            <person name="Ishibashi T."/>
            <person name="Yamashita H."/>
            <person name="Murakawa K."/>
            <person name="Fujimori K."/>
            <person name="Tanai H."/>
            <person name="Kimata M."/>
            <person name="Watanabe M."/>
            <person name="Hiraoka S."/>
            <person name="Chiba Y."/>
            <person name="Ishida S."/>
            <person name="Ono Y."/>
            <person name="Takiguchi S."/>
            <person name="Watanabe S."/>
            <person name="Yosida M."/>
            <person name="Hotuta T."/>
            <person name="Kusano J."/>
            <person name="Kanehori K."/>
            <person name="Takahashi-Fujii A."/>
            <person name="Hara H."/>
            <person name="Tanase T.-O."/>
            <person name="Nomura Y."/>
            <person name="Togiya S."/>
            <person name="Komai F."/>
            <person name="Hara R."/>
            <person name="Takeuchi K."/>
            <person name="Arita M."/>
            <person name="Imose N."/>
            <person name="Musashino K."/>
            <person name="Yuuki H."/>
            <person name="Oshima A."/>
            <person name="Sasaki N."/>
            <person name="Aotsuka S."/>
            <person name="Yoshikawa Y."/>
            <person name="Matsunawa H."/>
            <person name="Ichihara T."/>
            <person name="Shiohata N."/>
            <person name="Sano S."/>
            <person name="Moriya S."/>
            <person name="Momiyama H."/>
            <person name="Satoh N."/>
            <person name="Takami S."/>
            <person name="Terashima Y."/>
            <person name="Suzuki O."/>
            <person name="Nakagawa S."/>
            <person name="Senoh A."/>
            <person name="Mizoguchi H."/>
            <person name="Goto Y."/>
            <person name="Shimizu F."/>
            <person name="Wakebe H."/>
            <person name="Hishigaki H."/>
            <person name="Watanabe T."/>
            <person name="Sugiyama A."/>
            <person name="Takemoto M."/>
            <person name="Kawakami B."/>
            <person name="Yamazaki M."/>
            <person name="Watanabe K."/>
            <person name="Kumagai A."/>
            <person name="Itakura S."/>
            <person name="Fukuzumi Y."/>
            <person name="Fujimori Y."/>
            <person name="Komiyama M."/>
            <person name="Tashiro H."/>
            <person name="Tanigami A."/>
            <person name="Fujiwara T."/>
            <person name="Ono T."/>
            <person name="Yamada K."/>
            <person name="Fujii Y."/>
            <person name="Ozaki K."/>
            <person name="Hirao M."/>
            <person name="Ohmori Y."/>
            <person name="Kawabata A."/>
            <person name="Hikiji T."/>
            <person name="Kobatake N."/>
            <person name="Inagaki H."/>
            <person name="Ikema Y."/>
            <person name="Okamoto S."/>
            <person name="Okitani R."/>
            <person name="Kawakami T."/>
            <person name="Noguchi S."/>
            <person name="Itoh T."/>
            <person name="Shigeta K."/>
            <person name="Senba T."/>
            <person name="Matsumura K."/>
            <person name="Nakajima Y."/>
            <person name="Mizuno T."/>
            <person name="Morinaga M."/>
            <person name="Sasaki M."/>
            <person name="Togashi T."/>
            <person name="Oyama M."/>
            <person name="Hata H."/>
            <person name="Watanabe M."/>
            <person name="Komatsu T."/>
            <person name="Mizushima-Sugano J."/>
            <person name="Satoh T."/>
            <person name="Shirai Y."/>
            <person name="Takahashi Y."/>
            <person name="Nakagawa K."/>
            <person name="Okumura K."/>
            <person name="Nagase T."/>
            <person name="Nomura N."/>
            <person name="Kikuchi H."/>
            <person name="Masuho Y."/>
            <person name="Yamashita R."/>
            <person name="Nakai K."/>
            <person name="Yada T."/>
            <person name="Nakamura Y."/>
            <person name="Ohara O."/>
            <person name="Isogai T."/>
            <person name="Sugano S."/>
        </authorList>
    </citation>
    <scope>NUCLEOTIDE SEQUENCE [LARGE SCALE MRNA]</scope>
    <source>
        <tissue>Thalamus</tissue>
    </source>
</reference>
<reference key="5">
    <citation type="journal article" date="2004" name="Genome Res.">
        <title>The status, quality, and expansion of the NIH full-length cDNA project: the Mammalian Gene Collection (MGC).</title>
        <authorList>
            <consortium name="The MGC Project Team"/>
        </authorList>
    </citation>
    <scope>NUCLEOTIDE SEQUENCE [LARGE SCALE MRNA]</scope>
    <source>
        <tissue>Brain cortex</tissue>
    </source>
</reference>
<organism>
    <name type="scientific">Homo sapiens</name>
    <name type="common">Human</name>
    <dbReference type="NCBI Taxonomy" id="9606"/>
    <lineage>
        <taxon>Eukaryota</taxon>
        <taxon>Metazoa</taxon>
        <taxon>Chordata</taxon>
        <taxon>Craniata</taxon>
        <taxon>Vertebrata</taxon>
        <taxon>Euteleostomi</taxon>
        <taxon>Mammalia</taxon>
        <taxon>Eutheria</taxon>
        <taxon>Euarchontoglires</taxon>
        <taxon>Primates</taxon>
        <taxon>Haplorrhini</taxon>
        <taxon>Catarrhini</taxon>
        <taxon>Hominidae</taxon>
        <taxon>Homo</taxon>
    </lineage>
</organism>
<gene>
    <name type="primary">CACNG5</name>
</gene>
<name>CCG5_HUMAN</name>